<dbReference type="EMBL" id="AE015451">
    <property type="protein sequence ID" value="AAN66115.1"/>
    <property type="molecule type" value="Genomic_DNA"/>
</dbReference>
<dbReference type="RefSeq" id="NP_742651.1">
    <property type="nucleotide sequence ID" value="NC_002947.4"/>
</dbReference>
<dbReference type="RefSeq" id="WP_003255446.1">
    <property type="nucleotide sequence ID" value="NZ_CP169744.1"/>
</dbReference>
<dbReference type="SMR" id="Q88QK5"/>
<dbReference type="STRING" id="160488.PP_0485"/>
<dbReference type="PaxDb" id="160488-PP_0485"/>
<dbReference type="KEGG" id="ppu:PP_0485"/>
<dbReference type="PATRIC" id="fig|160488.4.peg.517"/>
<dbReference type="eggNOG" id="COG0629">
    <property type="taxonomic scope" value="Bacteria"/>
</dbReference>
<dbReference type="HOGENOM" id="CLU_078758_0_2_6"/>
<dbReference type="OrthoDB" id="9809878at2"/>
<dbReference type="PhylomeDB" id="Q88QK5"/>
<dbReference type="BioCyc" id="PPUT160488:G1G01-532-MONOMER"/>
<dbReference type="Proteomes" id="UP000000556">
    <property type="component" value="Chromosome"/>
</dbReference>
<dbReference type="GO" id="GO:0009295">
    <property type="term" value="C:nucleoid"/>
    <property type="evidence" value="ECO:0007669"/>
    <property type="project" value="TreeGrafter"/>
</dbReference>
<dbReference type="GO" id="GO:0003697">
    <property type="term" value="F:single-stranded DNA binding"/>
    <property type="evidence" value="ECO:0007669"/>
    <property type="project" value="UniProtKB-UniRule"/>
</dbReference>
<dbReference type="GO" id="GO:0006310">
    <property type="term" value="P:DNA recombination"/>
    <property type="evidence" value="ECO:0007669"/>
    <property type="project" value="UniProtKB-UniRule"/>
</dbReference>
<dbReference type="GO" id="GO:0006281">
    <property type="term" value="P:DNA repair"/>
    <property type="evidence" value="ECO:0007669"/>
    <property type="project" value="UniProtKB-UniRule"/>
</dbReference>
<dbReference type="GO" id="GO:0006260">
    <property type="term" value="P:DNA replication"/>
    <property type="evidence" value="ECO:0007669"/>
    <property type="project" value="UniProtKB-UniRule"/>
</dbReference>
<dbReference type="CDD" id="cd04496">
    <property type="entry name" value="SSB_OBF"/>
    <property type="match status" value="1"/>
</dbReference>
<dbReference type="Gene3D" id="2.40.50.140">
    <property type="entry name" value="Nucleic acid-binding proteins"/>
    <property type="match status" value="1"/>
</dbReference>
<dbReference type="HAMAP" id="MF_00984">
    <property type="entry name" value="SSB"/>
    <property type="match status" value="1"/>
</dbReference>
<dbReference type="InterPro" id="IPR012340">
    <property type="entry name" value="NA-bd_OB-fold"/>
</dbReference>
<dbReference type="InterPro" id="IPR000424">
    <property type="entry name" value="Primosome_PriB/ssb"/>
</dbReference>
<dbReference type="InterPro" id="IPR011344">
    <property type="entry name" value="ssDNA-bd"/>
</dbReference>
<dbReference type="NCBIfam" id="NF004357">
    <property type="entry name" value="PRK05733.1"/>
    <property type="match status" value="1"/>
</dbReference>
<dbReference type="NCBIfam" id="TIGR00621">
    <property type="entry name" value="ssb"/>
    <property type="match status" value="1"/>
</dbReference>
<dbReference type="PANTHER" id="PTHR10302">
    <property type="entry name" value="SINGLE-STRANDED DNA-BINDING PROTEIN"/>
    <property type="match status" value="1"/>
</dbReference>
<dbReference type="PANTHER" id="PTHR10302:SF27">
    <property type="entry name" value="SINGLE-STRANDED DNA-BINDING PROTEIN"/>
    <property type="match status" value="1"/>
</dbReference>
<dbReference type="Pfam" id="PF00436">
    <property type="entry name" value="SSB"/>
    <property type="match status" value="1"/>
</dbReference>
<dbReference type="PIRSF" id="PIRSF002070">
    <property type="entry name" value="SSB"/>
    <property type="match status" value="1"/>
</dbReference>
<dbReference type="SUPFAM" id="SSF50249">
    <property type="entry name" value="Nucleic acid-binding proteins"/>
    <property type="match status" value="1"/>
</dbReference>
<dbReference type="PROSITE" id="PS50935">
    <property type="entry name" value="SSB"/>
    <property type="match status" value="1"/>
</dbReference>
<proteinExistence type="inferred from homology"/>
<feature type="chain" id="PRO_0000096079" description="Single-stranded DNA-binding protein">
    <location>
        <begin position="1"/>
        <end position="181"/>
    </location>
</feature>
<feature type="domain" description="SSB" evidence="1">
    <location>
        <begin position="5"/>
        <end position="109"/>
    </location>
</feature>
<feature type="region of interest" description="Disordered" evidence="2">
    <location>
        <begin position="111"/>
        <end position="181"/>
    </location>
</feature>
<feature type="short sequence motif" description="Important for interaction with partner proteins" evidence="1">
    <location>
        <begin position="176"/>
        <end position="181"/>
    </location>
</feature>
<feature type="compositionally biased region" description="Low complexity" evidence="2">
    <location>
        <begin position="112"/>
        <end position="126"/>
    </location>
</feature>
<feature type="compositionally biased region" description="Gly residues" evidence="2">
    <location>
        <begin position="127"/>
        <end position="136"/>
    </location>
</feature>
<feature type="compositionally biased region" description="Low complexity" evidence="2">
    <location>
        <begin position="137"/>
        <end position="157"/>
    </location>
</feature>
<feature type="compositionally biased region" description="Pro residues" evidence="2">
    <location>
        <begin position="158"/>
        <end position="167"/>
    </location>
</feature>
<sequence length="181" mass="20059">MARGVNKVILVGTCGQDPEVRYLPNGNAVTNLSLATSEQWTDKQSGQKVERTEWHRVSLFGKVAEIAGEYLRKGSQCYIEGKLQTREWEKDGIKRYTTEIIVDINGTMQLLGGRPQGQQQGGDPYNQGGGNYGGGQQQQYNQAPPRQQAQRPQQAPQRPAPQQPAPQPAADFDSFDDDIPF</sequence>
<evidence type="ECO:0000255" key="1">
    <source>
        <dbReference type="HAMAP-Rule" id="MF_00984"/>
    </source>
</evidence>
<evidence type="ECO:0000256" key="2">
    <source>
        <dbReference type="SAM" id="MobiDB-lite"/>
    </source>
</evidence>
<name>SSB_PSEPK</name>
<reference key="1">
    <citation type="journal article" date="2002" name="Environ. Microbiol.">
        <title>Complete genome sequence and comparative analysis of the metabolically versatile Pseudomonas putida KT2440.</title>
        <authorList>
            <person name="Nelson K.E."/>
            <person name="Weinel C."/>
            <person name="Paulsen I.T."/>
            <person name="Dodson R.J."/>
            <person name="Hilbert H."/>
            <person name="Martins dos Santos V.A.P."/>
            <person name="Fouts D.E."/>
            <person name="Gill S.R."/>
            <person name="Pop M."/>
            <person name="Holmes M."/>
            <person name="Brinkac L.M."/>
            <person name="Beanan M.J."/>
            <person name="DeBoy R.T."/>
            <person name="Daugherty S.C."/>
            <person name="Kolonay J.F."/>
            <person name="Madupu R."/>
            <person name="Nelson W.C."/>
            <person name="White O."/>
            <person name="Peterson J.D."/>
            <person name="Khouri H.M."/>
            <person name="Hance I."/>
            <person name="Chris Lee P."/>
            <person name="Holtzapple E.K."/>
            <person name="Scanlan D."/>
            <person name="Tran K."/>
            <person name="Moazzez A."/>
            <person name="Utterback T.R."/>
            <person name="Rizzo M."/>
            <person name="Lee K."/>
            <person name="Kosack D."/>
            <person name="Moestl D."/>
            <person name="Wedler H."/>
            <person name="Lauber J."/>
            <person name="Stjepandic D."/>
            <person name="Hoheisel J."/>
            <person name="Straetz M."/>
            <person name="Heim S."/>
            <person name="Kiewitz C."/>
            <person name="Eisen J.A."/>
            <person name="Timmis K.N."/>
            <person name="Duesterhoeft A."/>
            <person name="Tuemmler B."/>
            <person name="Fraser C.M."/>
        </authorList>
    </citation>
    <scope>NUCLEOTIDE SEQUENCE [LARGE SCALE GENOMIC DNA]</scope>
    <source>
        <strain>ATCC 47054 / DSM 6125 / CFBP 8728 / NCIMB 11950 / KT2440</strain>
    </source>
</reference>
<gene>
    <name type="primary">ssb</name>
    <name type="ordered locus">PP_0485</name>
</gene>
<accession>Q88QK5</accession>
<organism>
    <name type="scientific">Pseudomonas putida (strain ATCC 47054 / DSM 6125 / CFBP 8728 / NCIMB 11950 / KT2440)</name>
    <dbReference type="NCBI Taxonomy" id="160488"/>
    <lineage>
        <taxon>Bacteria</taxon>
        <taxon>Pseudomonadati</taxon>
        <taxon>Pseudomonadota</taxon>
        <taxon>Gammaproteobacteria</taxon>
        <taxon>Pseudomonadales</taxon>
        <taxon>Pseudomonadaceae</taxon>
        <taxon>Pseudomonas</taxon>
    </lineage>
</organism>
<keyword id="KW-0227">DNA damage</keyword>
<keyword id="KW-0233">DNA recombination</keyword>
<keyword id="KW-0234">DNA repair</keyword>
<keyword id="KW-0235">DNA replication</keyword>
<keyword id="KW-0238">DNA-binding</keyword>
<keyword id="KW-1185">Reference proteome</keyword>
<protein>
    <recommendedName>
        <fullName evidence="1">Single-stranded DNA-binding protein</fullName>
        <shortName evidence="1">SSB</shortName>
    </recommendedName>
</protein>
<comment type="function">
    <text evidence="1">Plays an important role in DNA replication, recombination and repair. Binds to ssDNA and to an array of partner proteins to recruit them to their sites of action during DNA metabolism.</text>
</comment>
<comment type="subunit">
    <text evidence="1">Homotetramer.</text>
</comment>